<accession>Q8XMQ3</accession>
<protein>
    <recommendedName>
        <fullName evidence="1">Cysteine-type anaerobic sulfatase-maturating enzyme</fullName>
        <shortName evidence="1">Cys-type anaerobic sulfatase-maturating enzyme</shortName>
        <ecNumber evidence="1">1.8.98.7</ecNumber>
    </recommendedName>
    <alternativeName>
        <fullName evidence="1">Anaerobic sulfatase-maturating enzyme</fullName>
        <shortName evidence="1">AnSME</shortName>
    </alternativeName>
</protein>
<name>ANSME_CLOPE</name>
<dbReference type="EC" id="1.8.98.7" evidence="1"/>
<dbReference type="EMBL" id="BA000016">
    <property type="protein sequence ID" value="BAB80341.1"/>
    <property type="molecule type" value="Genomic_DNA"/>
</dbReference>
<dbReference type="RefSeq" id="WP_003476924.1">
    <property type="nucleotide sequence ID" value="NC_003366.1"/>
</dbReference>
<dbReference type="SMR" id="Q8XMQ3"/>
<dbReference type="STRING" id="195102.gene:10489896"/>
<dbReference type="KEGG" id="cpe:CPE0635"/>
<dbReference type="HOGENOM" id="CLU_009273_10_0_9"/>
<dbReference type="BRENDA" id="1.1.98.7">
    <property type="organism ID" value="1503"/>
</dbReference>
<dbReference type="BRENDA" id="1.8.98.7">
    <property type="organism ID" value="1503"/>
</dbReference>
<dbReference type="UniPathway" id="UPA00910"/>
<dbReference type="Proteomes" id="UP000000818">
    <property type="component" value="Chromosome"/>
</dbReference>
<dbReference type="GO" id="GO:0051539">
    <property type="term" value="F:4 iron, 4 sulfur cluster binding"/>
    <property type="evidence" value="ECO:0007669"/>
    <property type="project" value="UniProtKB-KW"/>
</dbReference>
<dbReference type="GO" id="GO:0046872">
    <property type="term" value="F:metal ion binding"/>
    <property type="evidence" value="ECO:0007669"/>
    <property type="project" value="UniProtKB-KW"/>
</dbReference>
<dbReference type="GO" id="GO:0016491">
    <property type="term" value="F:oxidoreductase activity"/>
    <property type="evidence" value="ECO:0007669"/>
    <property type="project" value="UniProtKB-KW"/>
</dbReference>
<dbReference type="CDD" id="cd01335">
    <property type="entry name" value="Radical_SAM"/>
    <property type="match status" value="1"/>
</dbReference>
<dbReference type="CDD" id="cd21120">
    <property type="entry name" value="SPASM_anSME"/>
    <property type="match status" value="1"/>
</dbReference>
<dbReference type="Gene3D" id="3.20.20.70">
    <property type="entry name" value="Aldolase class I"/>
    <property type="match status" value="1"/>
</dbReference>
<dbReference type="InterPro" id="IPR023885">
    <property type="entry name" value="4Fe4S-binding_SPASM_dom"/>
</dbReference>
<dbReference type="InterPro" id="IPR013785">
    <property type="entry name" value="Aldolase_TIM"/>
</dbReference>
<dbReference type="InterPro" id="IPR034485">
    <property type="entry name" value="Anaerobic_Cys-type_sulfatase-m"/>
</dbReference>
<dbReference type="InterPro" id="IPR007197">
    <property type="entry name" value="rSAM"/>
</dbReference>
<dbReference type="InterPro" id="IPR047207">
    <property type="entry name" value="SPASM_anSME"/>
</dbReference>
<dbReference type="InterPro" id="IPR023867">
    <property type="entry name" value="Sulphatase_maturase_rSAM"/>
</dbReference>
<dbReference type="NCBIfam" id="NF010321">
    <property type="entry name" value="PRK13758.1"/>
    <property type="match status" value="1"/>
</dbReference>
<dbReference type="NCBIfam" id="TIGR04085">
    <property type="entry name" value="rSAM_more_4Fe4S"/>
    <property type="match status" value="1"/>
</dbReference>
<dbReference type="NCBIfam" id="TIGR03942">
    <property type="entry name" value="sulfatase_rSAM"/>
    <property type="match status" value="1"/>
</dbReference>
<dbReference type="PANTHER" id="PTHR43273">
    <property type="entry name" value="ANAEROBIC SULFATASE-MATURATING ENZYME HOMOLOG ASLB-RELATED"/>
    <property type="match status" value="1"/>
</dbReference>
<dbReference type="PANTHER" id="PTHR43273:SF3">
    <property type="entry name" value="ANAEROBIC SULFATASE-MATURATING ENZYME HOMOLOG ASLB-RELATED"/>
    <property type="match status" value="1"/>
</dbReference>
<dbReference type="Pfam" id="PF13353">
    <property type="entry name" value="Fer4_12"/>
    <property type="match status" value="1"/>
</dbReference>
<dbReference type="Pfam" id="PF04055">
    <property type="entry name" value="Radical_SAM"/>
    <property type="match status" value="1"/>
</dbReference>
<dbReference type="Pfam" id="PF13186">
    <property type="entry name" value="SPASM"/>
    <property type="match status" value="1"/>
</dbReference>
<dbReference type="SFLD" id="SFLDF00289">
    <property type="entry name" value="anaerobic_Cys-type_sulfatase-m"/>
    <property type="match status" value="1"/>
</dbReference>
<dbReference type="SFLD" id="SFLDG01072">
    <property type="entry name" value="dehydrogenase_like"/>
    <property type="match status" value="1"/>
</dbReference>
<dbReference type="SFLD" id="SFLDG01384">
    <property type="entry name" value="thioether_bond_formation_requi"/>
    <property type="match status" value="1"/>
</dbReference>
<dbReference type="SUPFAM" id="SSF102114">
    <property type="entry name" value="Radical SAM enzymes"/>
    <property type="match status" value="1"/>
</dbReference>
<dbReference type="PROSITE" id="PS51918">
    <property type="entry name" value="RADICAL_SAM"/>
    <property type="match status" value="1"/>
</dbReference>
<keyword id="KW-0004">4Fe-4S</keyword>
<keyword id="KW-0408">Iron</keyword>
<keyword id="KW-0411">Iron-sulfur</keyword>
<keyword id="KW-0479">Metal-binding</keyword>
<keyword id="KW-0560">Oxidoreductase</keyword>
<keyword id="KW-1185">Reference proteome</keyword>
<keyword id="KW-0949">S-adenosyl-L-methionine</keyword>
<reference key="1">
    <citation type="journal article" date="2002" name="Proc. Natl. Acad. Sci. U.S.A.">
        <title>Complete genome sequence of Clostridium perfringens, an anaerobic flesh-eater.</title>
        <authorList>
            <person name="Shimizu T."/>
            <person name="Ohtani K."/>
            <person name="Hirakawa H."/>
            <person name="Ohshima K."/>
            <person name="Yamashita A."/>
            <person name="Shiba T."/>
            <person name="Ogasawara N."/>
            <person name="Hattori M."/>
            <person name="Kuhara S."/>
            <person name="Hayashi H."/>
        </authorList>
    </citation>
    <scope>NUCLEOTIDE SEQUENCE [LARGE SCALE GENOMIC DNA]</scope>
    <source>
        <strain>13 / Type A</strain>
    </source>
</reference>
<organism>
    <name type="scientific">Clostridium perfringens (strain 13 / Type A)</name>
    <dbReference type="NCBI Taxonomy" id="195102"/>
    <lineage>
        <taxon>Bacteria</taxon>
        <taxon>Bacillati</taxon>
        <taxon>Bacillota</taxon>
        <taxon>Clostridia</taxon>
        <taxon>Eubacteriales</taxon>
        <taxon>Clostridiaceae</taxon>
        <taxon>Clostridium</taxon>
    </lineage>
</organism>
<feature type="chain" id="PRO_0000333036" description="Cysteine-type anaerobic sulfatase-maturating enzyme">
    <location>
        <begin position="1"/>
        <end position="370"/>
    </location>
</feature>
<feature type="domain" description="Radical SAM core" evidence="2">
    <location>
        <begin position="1"/>
        <end position="227"/>
    </location>
</feature>
<feature type="active site" description="Proton acceptor" evidence="1">
    <location>
        <position position="277"/>
    </location>
</feature>
<feature type="binding site" evidence="1">
    <location>
        <position position="15"/>
    </location>
    <ligand>
        <name>[4Fe-4S] cluster</name>
        <dbReference type="ChEBI" id="CHEBI:49883"/>
        <label>1</label>
        <note>4Fe-4S-S-AdoMet</note>
    </ligand>
</feature>
<feature type="binding site" evidence="1">
    <location>
        <position position="19"/>
    </location>
    <ligand>
        <name>[4Fe-4S] cluster</name>
        <dbReference type="ChEBI" id="CHEBI:49883"/>
        <label>1</label>
        <note>4Fe-4S-S-AdoMet</note>
    </ligand>
</feature>
<feature type="binding site" evidence="1">
    <location>
        <position position="21"/>
    </location>
    <ligand>
        <name>S-adenosyl-L-methionine</name>
        <dbReference type="ChEBI" id="CHEBI:59789"/>
    </ligand>
</feature>
<feature type="binding site" evidence="1">
    <location>
        <position position="22"/>
    </location>
    <ligand>
        <name>[4Fe-4S] cluster</name>
        <dbReference type="ChEBI" id="CHEBI:49883"/>
        <label>1</label>
        <note>4Fe-4S-S-AdoMet</note>
    </ligand>
</feature>
<feature type="binding site" evidence="1">
    <location>
        <position position="66"/>
    </location>
    <ligand>
        <name>S-adenosyl-L-methionine</name>
        <dbReference type="ChEBI" id="CHEBI:59789"/>
    </ligand>
</feature>
<feature type="binding site" evidence="1">
    <location>
        <position position="122"/>
    </location>
    <ligand>
        <name>S-adenosyl-L-methionine</name>
        <dbReference type="ChEBI" id="CHEBI:59789"/>
    </ligand>
</feature>
<feature type="binding site" evidence="1">
    <location>
        <position position="134"/>
    </location>
    <ligand>
        <name>S-adenosyl-L-methionine</name>
        <dbReference type="ChEBI" id="CHEBI:59789"/>
    </ligand>
</feature>
<feature type="binding site" evidence="1">
    <location>
        <position position="195"/>
    </location>
    <ligand>
        <name>S-adenosyl-L-methionine</name>
        <dbReference type="ChEBI" id="CHEBI:59789"/>
    </ligand>
</feature>
<feature type="binding site" evidence="1">
    <location>
        <position position="255"/>
    </location>
    <ligand>
        <name>[4Fe-4S] cluster</name>
        <dbReference type="ChEBI" id="CHEBI:49883"/>
        <label>2</label>
    </ligand>
</feature>
<feature type="binding site" evidence="1">
    <location>
        <position position="261"/>
    </location>
    <ligand>
        <name>[4Fe-4S] cluster</name>
        <dbReference type="ChEBI" id="CHEBI:49883"/>
        <label>2</label>
    </ligand>
</feature>
<feature type="binding site" evidence="1">
    <location>
        <position position="276"/>
    </location>
    <ligand>
        <name>[4Fe-4S] cluster</name>
        <dbReference type="ChEBI" id="CHEBI:49883"/>
        <label>2</label>
    </ligand>
</feature>
<feature type="binding site" evidence="1">
    <location>
        <position position="317"/>
    </location>
    <ligand>
        <name>[4Fe-4S] cluster</name>
        <dbReference type="ChEBI" id="CHEBI:49883"/>
        <label>3</label>
    </ligand>
</feature>
<feature type="binding site" evidence="1">
    <location>
        <position position="320"/>
    </location>
    <ligand>
        <name>[4Fe-4S] cluster</name>
        <dbReference type="ChEBI" id="CHEBI:49883"/>
        <label>3</label>
    </ligand>
</feature>
<feature type="binding site" evidence="1">
    <location>
        <position position="326"/>
    </location>
    <ligand>
        <name>[4Fe-4S] cluster</name>
        <dbReference type="ChEBI" id="CHEBI:49883"/>
        <label>3</label>
    </ligand>
</feature>
<feature type="binding site" evidence="1">
    <location>
        <position position="330"/>
    </location>
    <ligand>
        <name>[4Fe-4S] cluster</name>
        <dbReference type="ChEBI" id="CHEBI:49883"/>
        <label>2</label>
    </ligand>
</feature>
<feature type="binding site" evidence="1">
    <location>
        <position position="348"/>
    </location>
    <ligand>
        <name>[4Fe-4S] cluster</name>
        <dbReference type="ChEBI" id="CHEBI:49883"/>
        <label>3</label>
    </ligand>
</feature>
<comment type="function">
    <text evidence="1">Involved in 'Cys-type' sulfatase maturation under anaerobic conditions. Catalyzes the post-translational modification of cysteine into 3-oxoalanine (also known as C(alpha)-formylglycine (FGly)), by a free radical chemical mechanism initiated via the reductive cleavage of S-adenosyl-L-methionine (SAM).</text>
</comment>
<comment type="catalytic activity">
    <reaction evidence="1">
        <text>L-cysteinyl-[sulfatase] + S-adenosyl-L-methionine + H2O = 3-oxo-L-alanyl-[sulfatase] + hydrogen sulfide + 5'-deoxyadenosine + L-methionine + 2 H(+)</text>
        <dbReference type="Rhea" id="RHEA:61592"/>
        <dbReference type="Rhea" id="RHEA-COMP:12900"/>
        <dbReference type="Rhea" id="RHEA-COMP:12901"/>
        <dbReference type="ChEBI" id="CHEBI:15377"/>
        <dbReference type="ChEBI" id="CHEBI:15378"/>
        <dbReference type="ChEBI" id="CHEBI:17319"/>
        <dbReference type="ChEBI" id="CHEBI:29919"/>
        <dbReference type="ChEBI" id="CHEBI:29950"/>
        <dbReference type="ChEBI" id="CHEBI:57844"/>
        <dbReference type="ChEBI" id="CHEBI:59789"/>
        <dbReference type="ChEBI" id="CHEBI:85621"/>
        <dbReference type="EC" id="1.8.98.7"/>
    </reaction>
</comment>
<comment type="cofactor">
    <cofactor evidence="1">
        <name>[4Fe-4S] cluster</name>
        <dbReference type="ChEBI" id="CHEBI:49883"/>
    </cofactor>
    <text evidence="1">Binds 3 [4Fe-4S] clusters (By similarity). The first cluster is coordinated with 3 cysteines and an exchangeable S-adenosyl-L-methionine (By similarity).</text>
</comment>
<comment type="pathway">
    <text evidence="1">Protein modification; sulfatase oxidation.</text>
</comment>
<comment type="similarity">
    <text evidence="3">Belongs to the radical SAM superfamily. Anaerobic sulfatase-maturating enzyme family.</text>
</comment>
<evidence type="ECO:0000250" key="1">
    <source>
        <dbReference type="UniProtKB" id="Q0TTH1"/>
    </source>
</evidence>
<evidence type="ECO:0000255" key="2">
    <source>
        <dbReference type="PROSITE-ProRule" id="PRU01266"/>
    </source>
</evidence>
<evidence type="ECO:0000305" key="3"/>
<sequence>MPPLSLLIKPASSGCNLKCTYCFYHSLSDNRNVKSYGIMRDEVLESMVKRVLNEADGHCSFAFQGGEPILAGLEFFERLMELQRKHNYKNLKIYNSLQTNGTLIDESWAKFLSENKFLVGLSMDGPKEIHNLNRKDCCGLDTFSKVERAAELFKKYKVEFNILCVVTSNTARHVNKIYRYFKEKDFKFLQFINCLDPLYEEKGKYNYSLKPQDYTKFLKNLFDLWYEDFLNGNRVSIRYFDGLLETILLGKSSSCGMNGTCTCQFVVESDGSVYPCDFYVLDKWRLGNIQDMTMKELFETNKNHEFIKSSFKVHEECKKCKWFKLCKGGCRRCRDSKEDSDLELNYYCQSYKEFFEYAFPRLINVANNIK</sequence>
<gene>
    <name type="ordered locus">CPE0635</name>
</gene>
<proteinExistence type="inferred from homology"/>